<gene>
    <name evidence="1" type="primary">argB</name>
    <name type="ordered locus">Dshi_0324</name>
</gene>
<dbReference type="EC" id="2.7.2.8" evidence="1"/>
<dbReference type="EMBL" id="CP000830">
    <property type="protein sequence ID" value="ABV92073.1"/>
    <property type="molecule type" value="Genomic_DNA"/>
</dbReference>
<dbReference type="RefSeq" id="WP_012177003.1">
    <property type="nucleotide sequence ID" value="NC_009952.1"/>
</dbReference>
<dbReference type="SMR" id="A8LM96"/>
<dbReference type="STRING" id="398580.Dshi_0324"/>
<dbReference type="KEGG" id="dsh:Dshi_0324"/>
<dbReference type="eggNOG" id="COG0548">
    <property type="taxonomic scope" value="Bacteria"/>
</dbReference>
<dbReference type="HOGENOM" id="CLU_053680_0_0_5"/>
<dbReference type="OrthoDB" id="9803155at2"/>
<dbReference type="UniPathway" id="UPA00068">
    <property type="reaction ID" value="UER00107"/>
</dbReference>
<dbReference type="Proteomes" id="UP000006833">
    <property type="component" value="Chromosome"/>
</dbReference>
<dbReference type="GO" id="GO:0005737">
    <property type="term" value="C:cytoplasm"/>
    <property type="evidence" value="ECO:0007669"/>
    <property type="project" value="UniProtKB-SubCell"/>
</dbReference>
<dbReference type="GO" id="GO:0003991">
    <property type="term" value="F:acetylglutamate kinase activity"/>
    <property type="evidence" value="ECO:0007669"/>
    <property type="project" value="UniProtKB-UniRule"/>
</dbReference>
<dbReference type="GO" id="GO:0005524">
    <property type="term" value="F:ATP binding"/>
    <property type="evidence" value="ECO:0007669"/>
    <property type="project" value="UniProtKB-UniRule"/>
</dbReference>
<dbReference type="GO" id="GO:0042450">
    <property type="term" value="P:arginine biosynthetic process via ornithine"/>
    <property type="evidence" value="ECO:0007669"/>
    <property type="project" value="UniProtKB-UniRule"/>
</dbReference>
<dbReference type="GO" id="GO:0006526">
    <property type="term" value="P:L-arginine biosynthetic process"/>
    <property type="evidence" value="ECO:0007669"/>
    <property type="project" value="UniProtKB-UniPathway"/>
</dbReference>
<dbReference type="CDD" id="cd04250">
    <property type="entry name" value="AAK_NAGK-C"/>
    <property type="match status" value="1"/>
</dbReference>
<dbReference type="FunFam" id="3.40.1160.10:FF:000004">
    <property type="entry name" value="Acetylglutamate kinase"/>
    <property type="match status" value="1"/>
</dbReference>
<dbReference type="Gene3D" id="3.40.1160.10">
    <property type="entry name" value="Acetylglutamate kinase-like"/>
    <property type="match status" value="1"/>
</dbReference>
<dbReference type="HAMAP" id="MF_00082">
    <property type="entry name" value="ArgB"/>
    <property type="match status" value="1"/>
</dbReference>
<dbReference type="InterPro" id="IPR036393">
    <property type="entry name" value="AceGlu_kinase-like_sf"/>
</dbReference>
<dbReference type="InterPro" id="IPR004662">
    <property type="entry name" value="AcgluKinase_fam"/>
</dbReference>
<dbReference type="InterPro" id="IPR037528">
    <property type="entry name" value="ArgB"/>
</dbReference>
<dbReference type="InterPro" id="IPR001048">
    <property type="entry name" value="Asp/Glu/Uridylate_kinase"/>
</dbReference>
<dbReference type="InterPro" id="IPR001057">
    <property type="entry name" value="Glu/AcGlu_kinase"/>
</dbReference>
<dbReference type="InterPro" id="IPR041727">
    <property type="entry name" value="NAGK-C"/>
</dbReference>
<dbReference type="NCBIfam" id="TIGR00761">
    <property type="entry name" value="argB"/>
    <property type="match status" value="1"/>
</dbReference>
<dbReference type="PANTHER" id="PTHR23342">
    <property type="entry name" value="N-ACETYLGLUTAMATE SYNTHASE"/>
    <property type="match status" value="1"/>
</dbReference>
<dbReference type="PANTHER" id="PTHR23342:SF0">
    <property type="entry name" value="N-ACETYLGLUTAMATE SYNTHASE, MITOCHONDRIAL"/>
    <property type="match status" value="1"/>
</dbReference>
<dbReference type="Pfam" id="PF00696">
    <property type="entry name" value="AA_kinase"/>
    <property type="match status" value="1"/>
</dbReference>
<dbReference type="PIRSF" id="PIRSF000728">
    <property type="entry name" value="NAGK"/>
    <property type="match status" value="1"/>
</dbReference>
<dbReference type="PRINTS" id="PR00474">
    <property type="entry name" value="GLU5KINASE"/>
</dbReference>
<dbReference type="SUPFAM" id="SSF53633">
    <property type="entry name" value="Carbamate kinase-like"/>
    <property type="match status" value="1"/>
</dbReference>
<feature type="chain" id="PRO_1000075310" description="Acetylglutamate kinase">
    <location>
        <begin position="1"/>
        <end position="287"/>
    </location>
</feature>
<feature type="binding site" evidence="1">
    <location>
        <begin position="70"/>
        <end position="71"/>
    </location>
    <ligand>
        <name>substrate</name>
    </ligand>
</feature>
<feature type="binding site" evidence="1">
    <location>
        <position position="92"/>
    </location>
    <ligand>
        <name>substrate</name>
    </ligand>
</feature>
<feature type="binding site" evidence="1">
    <location>
        <position position="184"/>
    </location>
    <ligand>
        <name>substrate</name>
    </ligand>
</feature>
<feature type="site" description="Transition state stabilizer" evidence="1">
    <location>
        <position position="35"/>
    </location>
</feature>
<feature type="site" description="Transition state stabilizer" evidence="1">
    <location>
        <position position="244"/>
    </location>
</feature>
<proteinExistence type="inferred from homology"/>
<accession>A8LM96</accession>
<comment type="function">
    <text evidence="1">Catalyzes the ATP-dependent phosphorylation of N-acetyl-L-glutamate.</text>
</comment>
<comment type="catalytic activity">
    <reaction evidence="1">
        <text>N-acetyl-L-glutamate + ATP = N-acetyl-L-glutamyl 5-phosphate + ADP</text>
        <dbReference type="Rhea" id="RHEA:14629"/>
        <dbReference type="ChEBI" id="CHEBI:30616"/>
        <dbReference type="ChEBI" id="CHEBI:44337"/>
        <dbReference type="ChEBI" id="CHEBI:57936"/>
        <dbReference type="ChEBI" id="CHEBI:456216"/>
        <dbReference type="EC" id="2.7.2.8"/>
    </reaction>
</comment>
<comment type="pathway">
    <text evidence="1">Amino-acid biosynthesis; L-arginine biosynthesis; N(2)-acetyl-L-ornithine from L-glutamate: step 2/4.</text>
</comment>
<comment type="subcellular location">
    <subcellularLocation>
        <location evidence="1">Cytoplasm</location>
    </subcellularLocation>
</comment>
<comment type="similarity">
    <text evidence="1">Belongs to the acetylglutamate kinase family. ArgB subfamily.</text>
</comment>
<reference key="1">
    <citation type="journal article" date="2010" name="ISME J.">
        <title>The complete genome sequence of the algal symbiont Dinoroseobacter shibae: a hitchhiker's guide to life in the sea.</title>
        <authorList>
            <person name="Wagner-Dobler I."/>
            <person name="Ballhausen B."/>
            <person name="Berger M."/>
            <person name="Brinkhoff T."/>
            <person name="Buchholz I."/>
            <person name="Bunk B."/>
            <person name="Cypionka H."/>
            <person name="Daniel R."/>
            <person name="Drepper T."/>
            <person name="Gerdts G."/>
            <person name="Hahnke S."/>
            <person name="Han C."/>
            <person name="Jahn D."/>
            <person name="Kalhoefer D."/>
            <person name="Kiss H."/>
            <person name="Klenk H.P."/>
            <person name="Kyrpides N."/>
            <person name="Liebl W."/>
            <person name="Liesegang H."/>
            <person name="Meincke L."/>
            <person name="Pati A."/>
            <person name="Petersen J."/>
            <person name="Piekarski T."/>
            <person name="Pommerenke C."/>
            <person name="Pradella S."/>
            <person name="Pukall R."/>
            <person name="Rabus R."/>
            <person name="Stackebrandt E."/>
            <person name="Thole S."/>
            <person name="Thompson L."/>
            <person name="Tielen P."/>
            <person name="Tomasch J."/>
            <person name="von Jan M."/>
            <person name="Wanphrut N."/>
            <person name="Wichels A."/>
            <person name="Zech H."/>
            <person name="Simon M."/>
        </authorList>
    </citation>
    <scope>NUCLEOTIDE SEQUENCE [LARGE SCALE GENOMIC DNA]</scope>
    <source>
        <strain>DSM 16493 / NCIMB 14021 / DFL 12</strain>
    </source>
</reference>
<name>ARGB_DINSH</name>
<evidence type="ECO:0000255" key="1">
    <source>
        <dbReference type="HAMAP-Rule" id="MF_00082"/>
    </source>
</evidence>
<sequence>MKTRPMKSDWIATARTLSEAVPFLRRYDDAIVVIKFGGHAMGDAEAMASFARDIVLMRQVGVNPVIVHGGGPMINAMLAKLDINSDFVNGKRVTDAATIEVVEMVLSGLVNKRIVQAINREGGRAIGLSGKDANLIVCDPADPALGFVGEPVEVTPDTLLQLVRSEIIPVIAPIGTGREGETFNINGDTAAGAIAAALKADRLLLLTDVSGVKDAQGKVVTELTVENIEEMTAAGVIAGGMIPKTETCVTAIRGGVRAAVILDGRAPNACLLELFTEHGAGSIIRRG</sequence>
<protein>
    <recommendedName>
        <fullName evidence="1">Acetylglutamate kinase</fullName>
        <ecNumber evidence="1">2.7.2.8</ecNumber>
    </recommendedName>
    <alternativeName>
        <fullName evidence="1">N-acetyl-L-glutamate 5-phosphotransferase</fullName>
    </alternativeName>
    <alternativeName>
        <fullName evidence="1">NAG kinase</fullName>
        <shortName evidence="1">NAGK</shortName>
    </alternativeName>
</protein>
<organism>
    <name type="scientific">Dinoroseobacter shibae (strain DSM 16493 / NCIMB 14021 / DFL 12)</name>
    <dbReference type="NCBI Taxonomy" id="398580"/>
    <lineage>
        <taxon>Bacteria</taxon>
        <taxon>Pseudomonadati</taxon>
        <taxon>Pseudomonadota</taxon>
        <taxon>Alphaproteobacteria</taxon>
        <taxon>Rhodobacterales</taxon>
        <taxon>Roseobacteraceae</taxon>
        <taxon>Dinoroseobacter</taxon>
    </lineage>
</organism>
<keyword id="KW-0028">Amino-acid biosynthesis</keyword>
<keyword id="KW-0055">Arginine biosynthesis</keyword>
<keyword id="KW-0067">ATP-binding</keyword>
<keyword id="KW-0963">Cytoplasm</keyword>
<keyword id="KW-0418">Kinase</keyword>
<keyword id="KW-0547">Nucleotide-binding</keyword>
<keyword id="KW-1185">Reference proteome</keyword>
<keyword id="KW-0808">Transferase</keyword>